<protein>
    <recommendedName>
        <fullName>Cell-division control histidine kinase PdhS</fullName>
        <ecNumber>2.7.13.3</ecNumber>
    </recommendedName>
</protein>
<evidence type="ECO:0000250" key="1"/>
<evidence type="ECO:0000255" key="2">
    <source>
        <dbReference type="PROSITE-ProRule" id="PRU00107"/>
    </source>
</evidence>
<evidence type="ECO:0000255" key="3">
    <source>
        <dbReference type="PROSITE-ProRule" id="PRU00140"/>
    </source>
</evidence>
<evidence type="ECO:0000256" key="4">
    <source>
        <dbReference type="SAM" id="MobiDB-lite"/>
    </source>
</evidence>
<gene>
    <name type="primary">pdhS</name>
    <name type="ordered locus">BOV_1549</name>
</gene>
<comment type="function">
    <text evidence="1">Functions as a polar differentiation marker. Essential protein that, by localizing in the old pole of dividing cells, controls cell division and maturation, probably through control of DivK phosphorylation status and cellular distribution, which in turn regulates CtrA, a transcriptional regulator of the minB operon. The asymmetrical localization of this protein is probably required for cells to enter a new division cycle (By similarity).</text>
</comment>
<comment type="catalytic activity">
    <reaction>
        <text>ATP + protein L-histidine = ADP + protein N-phospho-L-histidine.</text>
        <dbReference type="EC" id="2.7.13.3"/>
    </reaction>
</comment>
<comment type="subunit">
    <text evidence="1">Interacts with DivK.</text>
</comment>
<comment type="subcellular location">
    <subcellularLocation>
        <location evidence="1">Cytoplasm</location>
    </subcellularLocation>
    <text evidence="1">Localizes at the old pole of dividing cells. Colocalizes with DivK (By similarity).</text>
</comment>
<dbReference type="EC" id="2.7.13.3"/>
<dbReference type="EMBL" id="CP000708">
    <property type="protein sequence ID" value="ABQ60845.1"/>
    <property type="molecule type" value="Genomic_DNA"/>
</dbReference>
<dbReference type="RefSeq" id="WP_006013398.1">
    <property type="nucleotide sequence ID" value="NC_009505.1"/>
</dbReference>
<dbReference type="SMR" id="A5VRX4"/>
<dbReference type="GeneID" id="45124921"/>
<dbReference type="KEGG" id="bov:BOV_1549"/>
<dbReference type="HOGENOM" id="CLU_000445_23_0_5"/>
<dbReference type="PhylomeDB" id="A5VRX4"/>
<dbReference type="Proteomes" id="UP000006383">
    <property type="component" value="Chromosome I"/>
</dbReference>
<dbReference type="GO" id="GO:0005737">
    <property type="term" value="C:cytoplasm"/>
    <property type="evidence" value="ECO:0007669"/>
    <property type="project" value="UniProtKB-SubCell"/>
</dbReference>
<dbReference type="GO" id="GO:0005886">
    <property type="term" value="C:plasma membrane"/>
    <property type="evidence" value="ECO:0007669"/>
    <property type="project" value="TreeGrafter"/>
</dbReference>
<dbReference type="GO" id="GO:0005524">
    <property type="term" value="F:ATP binding"/>
    <property type="evidence" value="ECO:0007669"/>
    <property type="project" value="UniProtKB-KW"/>
</dbReference>
<dbReference type="GO" id="GO:0009927">
    <property type="term" value="F:histidine phosphotransfer kinase activity"/>
    <property type="evidence" value="ECO:0007669"/>
    <property type="project" value="TreeGrafter"/>
</dbReference>
<dbReference type="GO" id="GO:0000155">
    <property type="term" value="F:phosphorelay sensor kinase activity"/>
    <property type="evidence" value="ECO:0007669"/>
    <property type="project" value="InterPro"/>
</dbReference>
<dbReference type="GO" id="GO:0051301">
    <property type="term" value="P:cell division"/>
    <property type="evidence" value="ECO:0007669"/>
    <property type="project" value="UniProtKB-KW"/>
</dbReference>
<dbReference type="GO" id="GO:0006355">
    <property type="term" value="P:regulation of DNA-templated transcription"/>
    <property type="evidence" value="ECO:0007669"/>
    <property type="project" value="InterPro"/>
</dbReference>
<dbReference type="CDD" id="cd00082">
    <property type="entry name" value="HisKA"/>
    <property type="match status" value="1"/>
</dbReference>
<dbReference type="CDD" id="cd00130">
    <property type="entry name" value="PAS"/>
    <property type="match status" value="1"/>
</dbReference>
<dbReference type="Gene3D" id="1.10.287.130">
    <property type="match status" value="1"/>
</dbReference>
<dbReference type="Gene3D" id="3.30.565.10">
    <property type="entry name" value="Histidine kinase-like ATPase, C-terminal domain"/>
    <property type="match status" value="1"/>
</dbReference>
<dbReference type="Gene3D" id="3.30.450.20">
    <property type="entry name" value="PAS domain"/>
    <property type="match status" value="1"/>
</dbReference>
<dbReference type="InterPro" id="IPR036890">
    <property type="entry name" value="HATPase_C_sf"/>
</dbReference>
<dbReference type="InterPro" id="IPR005467">
    <property type="entry name" value="His_kinase_dom"/>
</dbReference>
<dbReference type="InterPro" id="IPR003661">
    <property type="entry name" value="HisK_dim/P_dom"/>
</dbReference>
<dbReference type="InterPro" id="IPR036097">
    <property type="entry name" value="HisK_dim/P_sf"/>
</dbReference>
<dbReference type="InterPro" id="IPR000014">
    <property type="entry name" value="PAS"/>
</dbReference>
<dbReference type="InterPro" id="IPR035965">
    <property type="entry name" value="PAS-like_dom_sf"/>
</dbReference>
<dbReference type="InterPro" id="IPR013767">
    <property type="entry name" value="PAS_fold"/>
</dbReference>
<dbReference type="InterPro" id="IPR048231">
    <property type="entry name" value="PdhS_histid_kinase"/>
</dbReference>
<dbReference type="InterPro" id="IPR004358">
    <property type="entry name" value="Sig_transdc_His_kin-like_C"/>
</dbReference>
<dbReference type="NCBIfam" id="NF041593">
    <property type="entry name" value="histid_kinase_PdhS"/>
    <property type="match status" value="1"/>
</dbReference>
<dbReference type="NCBIfam" id="TIGR00229">
    <property type="entry name" value="sensory_box"/>
    <property type="match status" value="1"/>
</dbReference>
<dbReference type="PANTHER" id="PTHR43047:SF72">
    <property type="entry name" value="OSMOSENSING HISTIDINE PROTEIN KINASE SLN1"/>
    <property type="match status" value="1"/>
</dbReference>
<dbReference type="PANTHER" id="PTHR43047">
    <property type="entry name" value="TWO-COMPONENT HISTIDINE PROTEIN KINASE"/>
    <property type="match status" value="1"/>
</dbReference>
<dbReference type="Pfam" id="PF02518">
    <property type="entry name" value="HATPase_c"/>
    <property type="match status" value="1"/>
</dbReference>
<dbReference type="Pfam" id="PF00512">
    <property type="entry name" value="HisKA"/>
    <property type="match status" value="1"/>
</dbReference>
<dbReference type="Pfam" id="PF00989">
    <property type="entry name" value="PAS"/>
    <property type="match status" value="1"/>
</dbReference>
<dbReference type="Pfam" id="PF13188">
    <property type="entry name" value="PAS_8"/>
    <property type="match status" value="1"/>
</dbReference>
<dbReference type="PRINTS" id="PR00344">
    <property type="entry name" value="BCTRLSENSOR"/>
</dbReference>
<dbReference type="SMART" id="SM00387">
    <property type="entry name" value="HATPase_c"/>
    <property type="match status" value="1"/>
</dbReference>
<dbReference type="SMART" id="SM00388">
    <property type="entry name" value="HisKA"/>
    <property type="match status" value="1"/>
</dbReference>
<dbReference type="SMART" id="SM00091">
    <property type="entry name" value="PAS"/>
    <property type="match status" value="2"/>
</dbReference>
<dbReference type="SUPFAM" id="SSF55874">
    <property type="entry name" value="ATPase domain of HSP90 chaperone/DNA topoisomerase II/histidine kinase"/>
    <property type="match status" value="1"/>
</dbReference>
<dbReference type="SUPFAM" id="SSF47384">
    <property type="entry name" value="Homodimeric domain of signal transducing histidine kinase"/>
    <property type="match status" value="1"/>
</dbReference>
<dbReference type="SUPFAM" id="SSF55785">
    <property type="entry name" value="PYP-like sensor domain (PAS domain)"/>
    <property type="match status" value="1"/>
</dbReference>
<dbReference type="PROSITE" id="PS50109">
    <property type="entry name" value="HIS_KIN"/>
    <property type="match status" value="1"/>
</dbReference>
<dbReference type="PROSITE" id="PS50112">
    <property type="entry name" value="PAS"/>
    <property type="match status" value="1"/>
</dbReference>
<organism>
    <name type="scientific">Brucella ovis (strain ATCC 25840 / 63/290 / NCTC 10512)</name>
    <dbReference type="NCBI Taxonomy" id="444178"/>
    <lineage>
        <taxon>Bacteria</taxon>
        <taxon>Pseudomonadati</taxon>
        <taxon>Pseudomonadota</taxon>
        <taxon>Alphaproteobacteria</taxon>
        <taxon>Hyphomicrobiales</taxon>
        <taxon>Brucellaceae</taxon>
        <taxon>Brucella/Ochrobactrum group</taxon>
        <taxon>Brucella</taxon>
    </lineage>
</organism>
<reference key="1">
    <citation type="journal article" date="2009" name="PLoS ONE">
        <title>Genome degradation in Brucella ovis corresponds with narrowing of its host range and tissue tropism.</title>
        <authorList>
            <person name="Tsolis R.M."/>
            <person name="Seshadri R."/>
            <person name="Santos R.L."/>
            <person name="Sangari F.J."/>
            <person name="Lobo J.M."/>
            <person name="de Jong M.F."/>
            <person name="Ren Q."/>
            <person name="Myers G."/>
            <person name="Brinkac L.M."/>
            <person name="Nelson W.C."/>
            <person name="Deboy R.T."/>
            <person name="Angiuoli S."/>
            <person name="Khouri H."/>
            <person name="Dimitrov G."/>
            <person name="Robinson J.R."/>
            <person name="Mulligan S."/>
            <person name="Walker R.L."/>
            <person name="Elzer P.E."/>
            <person name="Hassan K.A."/>
            <person name="Paulsen I.T."/>
        </authorList>
    </citation>
    <scope>NUCLEOTIDE SEQUENCE [LARGE SCALE GENOMIC DNA]</scope>
    <source>
        <strain>ATCC 25840 / 63/290 / NCTC 10512</strain>
    </source>
</reference>
<accession>A5VRX4</accession>
<feature type="chain" id="PRO_0000361903" description="Cell-division control histidine kinase PdhS">
    <location>
        <begin position="1"/>
        <end position="1035"/>
    </location>
</feature>
<feature type="domain" description="PAS" evidence="3">
    <location>
        <begin position="659"/>
        <end position="730"/>
    </location>
</feature>
<feature type="domain" description="Histidine kinase" evidence="2">
    <location>
        <begin position="802"/>
        <end position="1031"/>
    </location>
</feature>
<feature type="region of interest" description="Important for polar localization" evidence="1">
    <location>
        <begin position="1"/>
        <end position="613"/>
    </location>
</feature>
<feature type="region of interest" description="Disordered" evidence="4">
    <location>
        <begin position="500"/>
        <end position="533"/>
    </location>
</feature>
<feature type="region of interest" description="Interaction with DivK" evidence="1">
    <location>
        <begin position="614"/>
        <end position="1035"/>
    </location>
</feature>
<feature type="modified residue" description="Phosphohistidine; by autocatalysis" evidence="2">
    <location>
        <position position="805"/>
    </location>
</feature>
<sequence length="1035" mass="111924">MSGSYPFIDIAALDSVREGFARGDAQLVLAHDLSTVLWVNGPGAKLFGYNRVEDLIEGQLDLPVATRRQIAAFSSENTSAPSAVAVRLGGGLRSELTHLHVSNIKLPDGVAALLVATQMPDNSAEAAISGLGDDSTHIALVDAVGKVVAASLRFALLDISASTLEDLIVEAGDATDRIVKRRIRTGSHSVPGAIARLTDTPALHLLCIVGDAPAQFQTAAEAVPLPDNAEAVLEEILPEQGDAPAQQAQKTHAEQPRPKTFAFDHDAPPARFIWKVGPDGTFSEISPDLAAVVGPNSADMVGRRFSDVANVFGFDTDGSIAALLLERDTWSGKRLLWPVEGTRLRVPVELAALPVYSRDREFLGFRGFGIVRPAEAEADPEEIGLALAGGIPQNRKPRKEPAETARMVGEDDVLALSEEVANDDQPAAVLPKPPLDITPTPGRRDSDKVISLLNSCAQEKVAADQAKFLKEKERATRPEGGLTKTERNAFREIAERLRKQGLANTRAESETPVSETSSIEPVEPTPPVKTRSEPIQPDETALLANLPVPVIIHSGDAIHYVNQALLDITGYESLDDIRSAGGVDVLFNSESDDGETRQSMVLRHADGSEEPVDAHLNAIAWRGGRALMLSLMPVTAADLPAPAELPAANDEEKQALEAHVEELKTILDTATDGVVLIDPEGRIRSMNHSASALFGYERDEAEGKFFSMLFAIESQRAAMDYLHGLSGNGVLSVLNDGREVIGREAKGGFIPLFMTIGKLPHTRGFCAVLRDITQWKRTEEELTNARKEAERASNQKTEFLARISHEIRTPLNAIIGFSELMADEKFGPIGNDRYRDYLRDINRSGNHVLALVNDLLDISKIEAGALDMQFEAVSLNDAIGEAIALMQPQANRERVIIRSSFQSNLPDIVADSRSIKQVALNLLSNAVRFTAPGRQVIVSTSYELNGDVVMRVRDTGIGMSKSEVEQALKPFRQINALERRKAESAKDWRNEGTGLGLPLTKAMVEANRAQFAIDSNPGQGTVVEIVFPPTRVLAD</sequence>
<proteinExistence type="inferred from homology"/>
<keyword id="KW-0067">ATP-binding</keyword>
<keyword id="KW-0131">Cell cycle</keyword>
<keyword id="KW-0132">Cell division</keyword>
<keyword id="KW-0963">Cytoplasm</keyword>
<keyword id="KW-0418">Kinase</keyword>
<keyword id="KW-0547">Nucleotide-binding</keyword>
<keyword id="KW-0597">Phosphoprotein</keyword>
<keyword id="KW-0808">Transferase</keyword>
<name>PDHS_BRUO2</name>